<gene>
    <name type="primary">SWEET7B</name>
    <name type="ORF">OsI_30589</name>
</gene>
<feature type="chain" id="PRO_0000404145" description="Bidirectional sugar transporter SWEET7b">
    <location>
        <begin position="1"/>
        <end position="266"/>
    </location>
</feature>
<feature type="topological domain" description="Extracellular" evidence="2">
    <location>
        <begin position="1"/>
        <end position="9"/>
    </location>
</feature>
<feature type="transmembrane region" description="Helical; Name=1" evidence="2">
    <location>
        <begin position="10"/>
        <end position="30"/>
    </location>
</feature>
<feature type="topological domain" description="Cytoplasmic" evidence="2">
    <location>
        <begin position="31"/>
        <end position="45"/>
    </location>
</feature>
<feature type="transmembrane region" description="Helical; Name=2" evidence="2">
    <location>
        <begin position="46"/>
        <end position="66"/>
    </location>
</feature>
<feature type="topological domain" description="Extracellular" evidence="2">
    <location>
        <begin position="67"/>
        <end position="69"/>
    </location>
</feature>
<feature type="transmembrane region" description="Helical; Name=3" evidence="2">
    <location>
        <begin position="70"/>
        <end position="90"/>
    </location>
</feature>
<feature type="topological domain" description="Cytoplasmic" evidence="2">
    <location>
        <begin position="91"/>
        <end position="101"/>
    </location>
</feature>
<feature type="transmembrane region" description="Helical; Name=4" evidence="2">
    <location>
        <begin position="102"/>
        <end position="122"/>
    </location>
</feature>
<feature type="topological domain" description="Extracellular" evidence="2">
    <location>
        <begin position="123"/>
        <end position="131"/>
    </location>
</feature>
<feature type="transmembrane region" description="Helical; Name=5" evidence="2">
    <location>
        <begin position="132"/>
        <end position="152"/>
    </location>
</feature>
<feature type="topological domain" description="Cytoplasmic" evidence="2">
    <location>
        <begin position="153"/>
        <end position="165"/>
    </location>
</feature>
<feature type="transmembrane region" description="Helical; Name=6" evidence="2">
    <location>
        <begin position="166"/>
        <end position="186"/>
    </location>
</feature>
<feature type="topological domain" description="Extracellular" evidence="2">
    <location>
        <begin position="187"/>
        <end position="189"/>
    </location>
</feature>
<feature type="transmembrane region" description="Helical; Name=7" evidence="2">
    <location>
        <begin position="190"/>
        <end position="210"/>
    </location>
</feature>
<feature type="topological domain" description="Cytoplasmic" evidence="2">
    <location>
        <begin position="211"/>
        <end position="266"/>
    </location>
</feature>
<feature type="domain" description="MtN3/slv 1">
    <location>
        <begin position="10"/>
        <end position="97"/>
    </location>
</feature>
<feature type="domain" description="MtN3/slv 2">
    <location>
        <begin position="133"/>
        <end position="216"/>
    </location>
</feature>
<dbReference type="EMBL" id="CM000134">
    <property type="protein sequence ID" value="EAZ08335.1"/>
    <property type="molecule type" value="Genomic_DNA"/>
</dbReference>
<dbReference type="SMR" id="A2YZ24"/>
<dbReference type="EnsemblPlants" id="BGIOSGA030381-TA">
    <property type="protein sequence ID" value="BGIOSGA030381-PA"/>
    <property type="gene ID" value="BGIOSGA030381"/>
</dbReference>
<dbReference type="Gramene" id="BGIOSGA030381-TA">
    <property type="protein sequence ID" value="BGIOSGA030381-PA"/>
    <property type="gene ID" value="BGIOSGA030381"/>
</dbReference>
<dbReference type="HOGENOM" id="CLU_048643_1_0_1"/>
<dbReference type="OMA" id="VRLWLWI"/>
<dbReference type="Proteomes" id="UP000007015">
    <property type="component" value="Chromosome 9"/>
</dbReference>
<dbReference type="GO" id="GO:0005886">
    <property type="term" value="C:plasma membrane"/>
    <property type="evidence" value="ECO:0000250"/>
    <property type="project" value="UniProtKB"/>
</dbReference>
<dbReference type="GO" id="GO:0051119">
    <property type="term" value="F:sugar transmembrane transporter activity"/>
    <property type="evidence" value="ECO:0000250"/>
    <property type="project" value="UniProtKB"/>
</dbReference>
<dbReference type="FunFam" id="1.20.1280.290:FF:000001">
    <property type="entry name" value="Bidirectional sugar transporter SWEET"/>
    <property type="match status" value="1"/>
</dbReference>
<dbReference type="FunFam" id="1.20.1280.290:FF:000002">
    <property type="entry name" value="Bidirectional sugar transporter SWEET"/>
    <property type="match status" value="1"/>
</dbReference>
<dbReference type="Gene3D" id="1.20.1280.290">
    <property type="match status" value="2"/>
</dbReference>
<dbReference type="InterPro" id="IPR047664">
    <property type="entry name" value="SWEET"/>
</dbReference>
<dbReference type="InterPro" id="IPR004316">
    <property type="entry name" value="SWEET_rpt"/>
</dbReference>
<dbReference type="PANTHER" id="PTHR10791">
    <property type="entry name" value="RAG1-ACTIVATING PROTEIN 1"/>
    <property type="match status" value="1"/>
</dbReference>
<dbReference type="PANTHER" id="PTHR10791:SF30">
    <property type="entry name" value="SUGAR TRANSPORTER SWEET1"/>
    <property type="match status" value="1"/>
</dbReference>
<dbReference type="Pfam" id="PF03083">
    <property type="entry name" value="MtN3_slv"/>
    <property type="match status" value="2"/>
</dbReference>
<sequence>MVSPDLIRNMVGIVGNIISFGLFLSPVPTFYRIIKNKDVQDFKADPYLATLLNCMLWVFYGLPIVHPNSILVVTINGIGLIIEAVYLTIFFLFSDKKNKKKMGVVLATEALFMAAVVLGVLLGAHTHQRRSLIVGILCAIFGTIMYSSPLTIMSQVVKTKSVEYMPLLLSVVSFLNGLCWTSYALIRLDIFITIPNGLGVLFALMQLILYAIYYRTTPKKQDKNLELPTVAPVAKDTSIVTPVSKDDDVVDGGNASHVTINITIEP</sequence>
<evidence type="ECO:0000250" key="1">
    <source>
        <dbReference type="UniProtKB" id="Q8L9J7"/>
    </source>
</evidence>
<evidence type="ECO:0000255" key="2"/>
<evidence type="ECO:0000305" key="3"/>
<comment type="function">
    <text evidence="1">Mediates both low-affinity uptake and efflux of sugar across the plasma membrane.</text>
</comment>
<comment type="subunit">
    <text evidence="1">Forms homooligomers and/or heterooligomers.</text>
</comment>
<comment type="subcellular location">
    <subcellularLocation>
        <location evidence="1">Cell membrane</location>
        <topology evidence="1">Multi-pass membrane protein</topology>
    </subcellularLocation>
</comment>
<comment type="similarity">
    <text evidence="3">Belongs to the SWEET sugar transporter family.</text>
</comment>
<proteinExistence type="inferred from homology"/>
<name>SWT7B_ORYSI</name>
<accession>A2YZ24</accession>
<organism>
    <name type="scientific">Oryza sativa subsp. indica</name>
    <name type="common">Rice</name>
    <dbReference type="NCBI Taxonomy" id="39946"/>
    <lineage>
        <taxon>Eukaryota</taxon>
        <taxon>Viridiplantae</taxon>
        <taxon>Streptophyta</taxon>
        <taxon>Embryophyta</taxon>
        <taxon>Tracheophyta</taxon>
        <taxon>Spermatophyta</taxon>
        <taxon>Magnoliopsida</taxon>
        <taxon>Liliopsida</taxon>
        <taxon>Poales</taxon>
        <taxon>Poaceae</taxon>
        <taxon>BOP clade</taxon>
        <taxon>Oryzoideae</taxon>
        <taxon>Oryzeae</taxon>
        <taxon>Oryzinae</taxon>
        <taxon>Oryza</taxon>
        <taxon>Oryza sativa</taxon>
    </lineage>
</organism>
<keyword id="KW-1003">Cell membrane</keyword>
<keyword id="KW-0472">Membrane</keyword>
<keyword id="KW-1185">Reference proteome</keyword>
<keyword id="KW-0677">Repeat</keyword>
<keyword id="KW-0762">Sugar transport</keyword>
<keyword id="KW-0812">Transmembrane</keyword>
<keyword id="KW-1133">Transmembrane helix</keyword>
<keyword id="KW-0813">Transport</keyword>
<protein>
    <recommendedName>
        <fullName>Bidirectional sugar transporter SWEET7b</fullName>
        <shortName>OsSWEET7b</shortName>
    </recommendedName>
</protein>
<reference key="1">
    <citation type="journal article" date="2005" name="PLoS Biol.">
        <title>The genomes of Oryza sativa: a history of duplications.</title>
        <authorList>
            <person name="Yu J."/>
            <person name="Wang J."/>
            <person name="Lin W."/>
            <person name="Li S."/>
            <person name="Li H."/>
            <person name="Zhou J."/>
            <person name="Ni P."/>
            <person name="Dong W."/>
            <person name="Hu S."/>
            <person name="Zeng C."/>
            <person name="Zhang J."/>
            <person name="Zhang Y."/>
            <person name="Li R."/>
            <person name="Xu Z."/>
            <person name="Li S."/>
            <person name="Li X."/>
            <person name="Zheng H."/>
            <person name="Cong L."/>
            <person name="Lin L."/>
            <person name="Yin J."/>
            <person name="Geng J."/>
            <person name="Li G."/>
            <person name="Shi J."/>
            <person name="Liu J."/>
            <person name="Lv H."/>
            <person name="Li J."/>
            <person name="Wang J."/>
            <person name="Deng Y."/>
            <person name="Ran L."/>
            <person name="Shi X."/>
            <person name="Wang X."/>
            <person name="Wu Q."/>
            <person name="Li C."/>
            <person name="Ren X."/>
            <person name="Wang J."/>
            <person name="Wang X."/>
            <person name="Li D."/>
            <person name="Liu D."/>
            <person name="Zhang X."/>
            <person name="Ji Z."/>
            <person name="Zhao W."/>
            <person name="Sun Y."/>
            <person name="Zhang Z."/>
            <person name="Bao J."/>
            <person name="Han Y."/>
            <person name="Dong L."/>
            <person name="Ji J."/>
            <person name="Chen P."/>
            <person name="Wu S."/>
            <person name="Liu J."/>
            <person name="Xiao Y."/>
            <person name="Bu D."/>
            <person name="Tan J."/>
            <person name="Yang L."/>
            <person name="Ye C."/>
            <person name="Zhang J."/>
            <person name="Xu J."/>
            <person name="Zhou Y."/>
            <person name="Yu Y."/>
            <person name="Zhang B."/>
            <person name="Zhuang S."/>
            <person name="Wei H."/>
            <person name="Liu B."/>
            <person name="Lei M."/>
            <person name="Yu H."/>
            <person name="Li Y."/>
            <person name="Xu H."/>
            <person name="Wei S."/>
            <person name="He X."/>
            <person name="Fang L."/>
            <person name="Zhang Z."/>
            <person name="Zhang Y."/>
            <person name="Huang X."/>
            <person name="Su Z."/>
            <person name="Tong W."/>
            <person name="Li J."/>
            <person name="Tong Z."/>
            <person name="Li S."/>
            <person name="Ye J."/>
            <person name="Wang L."/>
            <person name="Fang L."/>
            <person name="Lei T."/>
            <person name="Chen C.-S."/>
            <person name="Chen H.-C."/>
            <person name="Xu Z."/>
            <person name="Li H."/>
            <person name="Huang H."/>
            <person name="Zhang F."/>
            <person name="Xu H."/>
            <person name="Li N."/>
            <person name="Zhao C."/>
            <person name="Li S."/>
            <person name="Dong L."/>
            <person name="Huang Y."/>
            <person name="Li L."/>
            <person name="Xi Y."/>
            <person name="Qi Q."/>
            <person name="Li W."/>
            <person name="Zhang B."/>
            <person name="Hu W."/>
            <person name="Zhang Y."/>
            <person name="Tian X."/>
            <person name="Jiao Y."/>
            <person name="Liang X."/>
            <person name="Jin J."/>
            <person name="Gao L."/>
            <person name="Zheng W."/>
            <person name="Hao B."/>
            <person name="Liu S.-M."/>
            <person name="Wang W."/>
            <person name="Yuan L."/>
            <person name="Cao M."/>
            <person name="McDermott J."/>
            <person name="Samudrala R."/>
            <person name="Wang J."/>
            <person name="Wong G.K.-S."/>
            <person name="Yang H."/>
        </authorList>
    </citation>
    <scope>NUCLEOTIDE SEQUENCE [LARGE SCALE GENOMIC DNA]</scope>
    <source>
        <strain>cv. 93-11</strain>
    </source>
</reference>